<evidence type="ECO:0000255" key="1">
    <source>
        <dbReference type="HAMAP-Rule" id="MF_01859"/>
    </source>
</evidence>
<evidence type="ECO:0000305" key="2"/>
<keyword id="KW-0963">Cytoplasm</keyword>
<keyword id="KW-0489">Methyltransferase</keyword>
<keyword id="KW-1185">Reference proteome</keyword>
<keyword id="KW-0698">rRNA processing</keyword>
<keyword id="KW-0949">S-adenosyl-L-methionine</keyword>
<keyword id="KW-0808">Transferase</keyword>
<feature type="chain" id="PRO_0000366523" description="Ribosomal RNA large subunit methyltransferase G">
    <location>
        <begin position="1"/>
        <end position="378"/>
    </location>
</feature>
<reference key="1">
    <citation type="journal article" date="2005" name="Nucleic Acids Res.">
        <title>Genome dynamics and diversity of Shigella species, the etiologic agents of bacillary dysentery.</title>
        <authorList>
            <person name="Yang F."/>
            <person name="Yang J."/>
            <person name="Zhang X."/>
            <person name="Chen L."/>
            <person name="Jiang Y."/>
            <person name="Yan Y."/>
            <person name="Tang X."/>
            <person name="Wang J."/>
            <person name="Xiong Z."/>
            <person name="Dong J."/>
            <person name="Xue Y."/>
            <person name="Zhu Y."/>
            <person name="Xu X."/>
            <person name="Sun L."/>
            <person name="Chen S."/>
            <person name="Nie H."/>
            <person name="Peng J."/>
            <person name="Xu J."/>
            <person name="Wang Y."/>
            <person name="Yuan Z."/>
            <person name="Wen Y."/>
            <person name="Yao Z."/>
            <person name="Shen Y."/>
            <person name="Qiang B."/>
            <person name="Hou Y."/>
            <person name="Yu J."/>
            <person name="Jin Q."/>
        </authorList>
    </citation>
    <scope>NUCLEOTIDE SEQUENCE [LARGE SCALE GENOMIC DNA]</scope>
    <source>
        <strain>Sd197</strain>
    </source>
</reference>
<proteinExistence type="inferred from homology"/>
<gene>
    <name evidence="1" type="primary">rlmG</name>
    <name type="ordered locus">SDY_3267</name>
</gene>
<dbReference type="EC" id="2.1.1.174" evidence="1"/>
<dbReference type="EMBL" id="CP000034">
    <property type="protein sequence ID" value="ABB63267.1"/>
    <property type="status" value="ALT_INIT"/>
    <property type="molecule type" value="Genomic_DNA"/>
</dbReference>
<dbReference type="RefSeq" id="WP_000018683.1">
    <property type="nucleotide sequence ID" value="NC_007606.1"/>
</dbReference>
<dbReference type="RefSeq" id="YP_404758.1">
    <property type="nucleotide sequence ID" value="NC_007606.1"/>
</dbReference>
<dbReference type="SMR" id="Q32BN8"/>
<dbReference type="STRING" id="300267.SDY_3267"/>
<dbReference type="EnsemblBacteria" id="ABB63267">
    <property type="protein sequence ID" value="ABB63267"/>
    <property type="gene ID" value="SDY_3267"/>
</dbReference>
<dbReference type="KEGG" id="sdy:SDY_3267"/>
<dbReference type="PATRIC" id="fig|300267.13.peg.3907"/>
<dbReference type="HOGENOM" id="CLU_040288_4_0_6"/>
<dbReference type="Proteomes" id="UP000002716">
    <property type="component" value="Chromosome"/>
</dbReference>
<dbReference type="GO" id="GO:0005737">
    <property type="term" value="C:cytoplasm"/>
    <property type="evidence" value="ECO:0007669"/>
    <property type="project" value="UniProtKB-SubCell"/>
</dbReference>
<dbReference type="GO" id="GO:0052916">
    <property type="term" value="F:23S rRNA (guanine(1835)-N(2))-methyltransferase activity"/>
    <property type="evidence" value="ECO:0007669"/>
    <property type="project" value="UniProtKB-EC"/>
</dbReference>
<dbReference type="GO" id="GO:0003676">
    <property type="term" value="F:nucleic acid binding"/>
    <property type="evidence" value="ECO:0007669"/>
    <property type="project" value="InterPro"/>
</dbReference>
<dbReference type="CDD" id="cd02440">
    <property type="entry name" value="AdoMet_MTases"/>
    <property type="match status" value="1"/>
</dbReference>
<dbReference type="FunFam" id="3.40.50.150:FF:000046">
    <property type="entry name" value="Ribosomal RNA large subunit methyltransferase G"/>
    <property type="match status" value="1"/>
</dbReference>
<dbReference type="FunFam" id="3.40.50.150:FF:000047">
    <property type="entry name" value="Ribosomal RNA large subunit methyltransferase G"/>
    <property type="match status" value="1"/>
</dbReference>
<dbReference type="Gene3D" id="3.40.50.150">
    <property type="entry name" value="Vaccinia Virus protein VP39"/>
    <property type="match status" value="2"/>
</dbReference>
<dbReference type="HAMAP" id="MF_01859">
    <property type="entry name" value="23SrRNA_methyltr_G"/>
    <property type="match status" value="1"/>
</dbReference>
<dbReference type="InterPro" id="IPR002052">
    <property type="entry name" value="DNA_methylase_N6_adenine_CS"/>
</dbReference>
<dbReference type="InterPro" id="IPR017237">
    <property type="entry name" value="rRNA_m2G-MeTrfase_RlmG"/>
</dbReference>
<dbReference type="InterPro" id="IPR046977">
    <property type="entry name" value="RsmC/RlmG"/>
</dbReference>
<dbReference type="InterPro" id="IPR029063">
    <property type="entry name" value="SAM-dependent_MTases_sf"/>
</dbReference>
<dbReference type="InterPro" id="IPR007848">
    <property type="entry name" value="Small_mtfrase_dom"/>
</dbReference>
<dbReference type="NCBIfam" id="NF011577">
    <property type="entry name" value="PRK15001.1"/>
    <property type="match status" value="1"/>
</dbReference>
<dbReference type="PANTHER" id="PTHR47816:SF5">
    <property type="entry name" value="RIBOSOMAL RNA LARGE SUBUNIT METHYLTRANSFERASE G"/>
    <property type="match status" value="1"/>
</dbReference>
<dbReference type="PANTHER" id="PTHR47816">
    <property type="entry name" value="RIBOSOMAL RNA SMALL SUBUNIT METHYLTRANSFERASE C"/>
    <property type="match status" value="1"/>
</dbReference>
<dbReference type="Pfam" id="PF05175">
    <property type="entry name" value="MTS"/>
    <property type="match status" value="1"/>
</dbReference>
<dbReference type="PIRSF" id="PIRSF037565">
    <property type="entry name" value="RRNA_m2G_Mtase_RsmD_prd"/>
    <property type="match status" value="1"/>
</dbReference>
<dbReference type="SUPFAM" id="SSF53335">
    <property type="entry name" value="S-adenosyl-L-methionine-dependent methyltransferases"/>
    <property type="match status" value="1"/>
</dbReference>
<name>RLMG_SHIDS</name>
<comment type="function">
    <text evidence="1">Specifically methylates the guanine in position 1835 (m2G1835) of 23S rRNA.</text>
</comment>
<comment type="catalytic activity">
    <reaction evidence="1">
        <text>guanosine(1835) in 23S rRNA + S-adenosyl-L-methionine = N(2)-methylguanosine(1835) in 23S rRNA + S-adenosyl-L-homocysteine + H(+)</text>
        <dbReference type="Rhea" id="RHEA:42744"/>
        <dbReference type="Rhea" id="RHEA-COMP:10217"/>
        <dbReference type="Rhea" id="RHEA-COMP:10218"/>
        <dbReference type="ChEBI" id="CHEBI:15378"/>
        <dbReference type="ChEBI" id="CHEBI:57856"/>
        <dbReference type="ChEBI" id="CHEBI:59789"/>
        <dbReference type="ChEBI" id="CHEBI:74269"/>
        <dbReference type="ChEBI" id="CHEBI:74481"/>
        <dbReference type="EC" id="2.1.1.174"/>
    </reaction>
</comment>
<comment type="subcellular location">
    <subcellularLocation>
        <location evidence="1">Cytoplasm</location>
    </subcellularLocation>
</comment>
<comment type="similarity">
    <text evidence="1">Belongs to the methyltransferase superfamily. RlmG family.</text>
</comment>
<comment type="sequence caution" evidence="2">
    <conflict type="erroneous initiation">
        <sequence resource="EMBL-CDS" id="ABB63267"/>
    </conflict>
</comment>
<organism>
    <name type="scientific">Shigella dysenteriae serotype 1 (strain Sd197)</name>
    <dbReference type="NCBI Taxonomy" id="300267"/>
    <lineage>
        <taxon>Bacteria</taxon>
        <taxon>Pseudomonadati</taxon>
        <taxon>Pseudomonadota</taxon>
        <taxon>Gammaproteobacteria</taxon>
        <taxon>Enterobacterales</taxon>
        <taxon>Enterobacteriaceae</taxon>
        <taxon>Shigella</taxon>
    </lineage>
</organism>
<protein>
    <recommendedName>
        <fullName evidence="1">Ribosomal RNA large subunit methyltransferase G</fullName>
        <ecNumber evidence="1">2.1.1.174</ecNumber>
    </recommendedName>
    <alternativeName>
        <fullName evidence="1">23S rRNA m2G1835 methyltransferase</fullName>
    </alternativeName>
    <alternativeName>
        <fullName evidence="1">rRNA (guanine-N(2)-)-methyltransferase RlmG</fullName>
    </alternativeName>
</protein>
<sequence>MSHLDNGFRSLTLQRFPATDDVNPLQAWEAADEYLLQQLDDTEIRGPVLILNDAFGALSCALAEHKPYSIGDSYISELATRENLRLNGIDESSVKFLDSTADYPQQPGVVLIKVPKTLALLEQQLRALRKVVTSDTRIIAGAKARDIHTSTLELFEKVLGPTTTTLAWKKARLINCTFNEPPLADAPQTVSWKLEGTDWTIHNHANVFSRTGLDIGARFFMQHLPENLEGEIVDLGCGNGVIGLTLLDKNPQAKVVFVDESPMAVASSRLNVETNMPEALDRCEFMINNALSGVEPFRFNAVLCNPPFHQQHALTDNVAWEMFHHARRCLKINGELYIVANRHLDYFHKLKKIFGNCTTIATNNKFVVLKAVKLGRRR</sequence>
<accession>Q32BN8</accession>